<organism>
    <name type="scientific">Fusarium pseudograminearum (strain CS3096)</name>
    <name type="common">Wheat and barley crown-rot fungus</name>
    <dbReference type="NCBI Taxonomy" id="1028729"/>
    <lineage>
        <taxon>Eukaryota</taxon>
        <taxon>Fungi</taxon>
        <taxon>Dikarya</taxon>
        <taxon>Ascomycota</taxon>
        <taxon>Pezizomycotina</taxon>
        <taxon>Sordariomycetes</taxon>
        <taxon>Hypocreomycetidae</taxon>
        <taxon>Hypocreales</taxon>
        <taxon>Nectriaceae</taxon>
        <taxon>Fusarium</taxon>
    </lineage>
</organism>
<proteinExistence type="inferred from homology"/>
<sequence>MELPTYAVSQSLLASRSVSSPRGDQPVRAATNGTQGQGQGQDGQNLTGKRKRTNPGYPSRESPKGSSSRCNGLTQYAVPASFQSPQIVQYSPPNQILRTPPSNDVDDQLSVNSRSEPVYPTLGVPGAVRQTQEQLQLHAARIPASHFLNNVPNFGYHSTDKDVAMKQNYFSDSTFFPSPAITDTWGELPAPDLSWETTTRPHSPGNRATPTVDKHVSVSAFEAALETGELASDRSIQNAYNAPSTTGDNHLETLVSIQDGLSQVLKAVEAAGFDSLDSAVIAYYQRSSKGNEWLRQEQRLNRMRRLPVLLKELHLAAQGWGQWERRNFQEQIIKSTEDILFAELQDHLATRRNSPHASPCSIEQRSQARQHMMEHDADPEAEFYDTSHGTEGIPADEMLHVNLLLY</sequence>
<comment type="function">
    <text evidence="2 5">The two putative transcription factors FPSE_09188 and FPSE_09189 could be responsible for orchestrating expression of the W493 A and B biosynthesis cluster genes (Probable). W493 A and B consist of six amino acid residues D-allo-thr, L-Ala, D-Ala, L-Gln, D-Tyr, and L-Val/L-Ile linked to a 3-hydroxy-4-methyltetradecanoic acid polyketide chain (PubMed:25412204).</text>
</comment>
<comment type="subcellular location">
    <subcellularLocation>
        <location evidence="5">Nucleus</location>
    </subcellularLocation>
</comment>
<comment type="similarity">
    <text evidence="4">Belongs to the bZIP family.</text>
</comment>
<comment type="caution">
    <text evidence="4">The N-terminal region is not conserved, preventing the detection of a bZIP domain.</text>
</comment>
<gene>
    <name type="ORF">FPSE_09188</name>
</gene>
<feature type="chain" id="PRO_0000445378" description="Probable transcription factor FPSE_09188">
    <location>
        <begin position="1"/>
        <end position="406"/>
    </location>
</feature>
<feature type="region of interest" description="Disordered" evidence="1">
    <location>
        <begin position="1"/>
        <end position="72"/>
    </location>
</feature>
<feature type="compositionally biased region" description="Low complexity" evidence="1">
    <location>
        <begin position="7"/>
        <end position="20"/>
    </location>
</feature>
<evidence type="ECO:0000256" key="1">
    <source>
        <dbReference type="SAM" id="MobiDB-lite"/>
    </source>
</evidence>
<evidence type="ECO:0000269" key="2">
    <source>
    </source>
</evidence>
<evidence type="ECO:0000303" key="3">
    <source>
    </source>
</evidence>
<evidence type="ECO:0000305" key="4"/>
<evidence type="ECO:0000305" key="5">
    <source>
    </source>
</evidence>
<dbReference type="EMBL" id="AFNW01000306">
    <property type="protein sequence ID" value="EKJ70678.1"/>
    <property type="molecule type" value="Genomic_DNA"/>
</dbReference>
<dbReference type="RefSeq" id="XP_009260580.1">
    <property type="nucleotide sequence ID" value="XM_009262305.1"/>
</dbReference>
<dbReference type="EnsemblFungi" id="EKJ70678">
    <property type="protein sequence ID" value="EKJ70678"/>
    <property type="gene ID" value="FPSE_09188"/>
</dbReference>
<dbReference type="GeneID" id="20367805"/>
<dbReference type="KEGG" id="fpu:FPSE_09188"/>
<dbReference type="eggNOG" id="ENOG502SNVG">
    <property type="taxonomic scope" value="Eukaryota"/>
</dbReference>
<dbReference type="HOGENOM" id="CLU_678001_0_0_1"/>
<dbReference type="OrthoDB" id="194358at2759"/>
<dbReference type="Proteomes" id="UP000007978">
    <property type="component" value="Chromosome 1"/>
</dbReference>
<dbReference type="GO" id="GO:0005634">
    <property type="term" value="C:nucleus"/>
    <property type="evidence" value="ECO:0007669"/>
    <property type="project" value="UniProtKB-SubCell"/>
</dbReference>
<dbReference type="GO" id="GO:0003677">
    <property type="term" value="F:DNA binding"/>
    <property type="evidence" value="ECO:0007669"/>
    <property type="project" value="UniProtKB-KW"/>
</dbReference>
<reference key="1">
    <citation type="journal article" date="2012" name="PLoS Pathog.">
        <title>Comparative pathogenomics reveals horizontally acquired novel virulence genes in fungi infecting cereal hosts.</title>
        <authorList>
            <person name="Gardiner D.M."/>
            <person name="McDonald M.C."/>
            <person name="Covarelli L."/>
            <person name="Solomon P.S."/>
            <person name="Rusu A.G."/>
            <person name="Marshall M."/>
            <person name="Kazan K."/>
            <person name="Chakraborty S."/>
            <person name="McDonald B.A."/>
            <person name="Manners J.M."/>
        </authorList>
    </citation>
    <scope>NUCLEOTIDE SEQUENCE [LARGE SCALE GENOMIC DNA]</scope>
    <source>
        <strain>CS3096</strain>
    </source>
</reference>
<reference key="2">
    <citation type="journal article" date="2014" name="J. Nat. Prod.">
        <title>Identification of the biosynthetic gene clusters for the lipopeptides fusaristatin A and W493 B in Fusarium graminearum and F. pseudograminearum.</title>
        <authorList>
            <person name="Soerensen J.L."/>
            <person name="Sondergaard T.E."/>
            <person name="Covarelli L."/>
            <person name="Fuertes P.R."/>
            <person name="Hansen F.T."/>
            <person name="Frandsen R.J."/>
            <person name="Saei W."/>
            <person name="Lukassen M.B."/>
            <person name="Wimmer R."/>
            <person name="Nielsen K.F."/>
            <person name="Gardiner D.M."/>
            <person name="Giese H."/>
        </authorList>
    </citation>
    <scope>IDENTIFICATION</scope>
    <scope>FUNCTION</scope>
</reference>
<accession>K3VDP7</accession>
<keyword id="KW-0238">DNA-binding</keyword>
<keyword id="KW-0539">Nucleus</keyword>
<keyword id="KW-1185">Reference proteome</keyword>
<keyword id="KW-0804">Transcription</keyword>
<keyword id="KW-0805">Transcription regulation</keyword>
<name>W4936_FUSPC</name>
<protein>
    <recommendedName>
        <fullName evidence="3">Probable transcription factor FPSE_09188</fullName>
    </recommendedName>
    <alternativeName>
        <fullName evidence="3">W493 A and B biosynthesis cluster protein FPSE_09188</fullName>
    </alternativeName>
</protein>